<feature type="chain" id="PRO_0000416613" description="Ribonuclease 3">
    <location>
        <begin position="1"/>
        <end position="357"/>
    </location>
</feature>
<feature type="domain" description="RNase III">
    <location>
        <begin position="6"/>
        <end position="155"/>
    </location>
</feature>
<feature type="domain" description="DRBM 1">
    <location>
        <begin position="198"/>
        <end position="267"/>
    </location>
</feature>
<feature type="domain" description="DRBM 2">
    <location>
        <begin position="285"/>
        <end position="355"/>
    </location>
</feature>
<feature type="active site" evidence="2">
    <location>
        <position position="49"/>
    </location>
</feature>
<feature type="active site" evidence="1">
    <location>
        <position position="144"/>
    </location>
</feature>
<feature type="binding site" evidence="1">
    <location>
        <position position="45"/>
    </location>
    <ligand>
        <name>Mg(2+)</name>
        <dbReference type="ChEBI" id="CHEBI:18420"/>
    </ligand>
</feature>
<feature type="binding site" evidence="1">
    <location>
        <position position="141"/>
    </location>
    <ligand>
        <name>Mg(2+)</name>
        <dbReference type="ChEBI" id="CHEBI:18420"/>
    </ligand>
</feature>
<feature type="binding site" evidence="1">
    <location>
        <position position="144"/>
    </location>
    <ligand>
        <name>Mg(2+)</name>
        <dbReference type="ChEBI" id="CHEBI:18420"/>
    </ligand>
</feature>
<organism>
    <name type="scientific">Roseburia hominis (strain DSM 16839 / JCM 17582 / NCIMB 14029 / A2-183)</name>
    <dbReference type="NCBI Taxonomy" id="585394"/>
    <lineage>
        <taxon>Bacteria</taxon>
        <taxon>Bacillati</taxon>
        <taxon>Bacillota</taxon>
        <taxon>Clostridia</taxon>
        <taxon>Lachnospirales</taxon>
        <taxon>Lachnospiraceae</taxon>
        <taxon>Roseburia</taxon>
    </lineage>
</organism>
<proteinExistence type="inferred from homology"/>
<gene>
    <name type="primary">rnc</name>
    <name type="ordered locus">RHOM_15125</name>
</gene>
<sequence length="357" mass="41045">MDEKEIKFIQDQIGYTFKNQELLVQAFTRRSYSMENGGQDNEVLEFIGDKALDFVVVKQLSEEFGHYSKKYQNWEKWGKTEETGTFISDLDEGELTEIKKQLVQKNTLADAIDNLGIAYYLIMGKGDVEKNIQDSLSVKEDLFEAILGAIALDSNWDIEALQDSMNVMLNPGELMFDEDVNYVAEIQAWSSANSGNIPLHCFYPTSMQGTWYMPRHHMCIYGKAEQDTHFACEVLIPGIDYHFVGYGRSKNLARMDASRLAYEYLKDEDMLFSIRDEIDDPNYNDSIGQLEILARRGYFSIPQYDFKETHDEDGNPVWNCKCSIKEKDTVTNGRSSSKKDAKKQAAYDMLTFVLEEE</sequence>
<accession>G2SYN4</accession>
<keyword id="KW-0963">Cytoplasm</keyword>
<keyword id="KW-0255">Endonuclease</keyword>
<keyword id="KW-0378">Hydrolase</keyword>
<keyword id="KW-0460">Magnesium</keyword>
<keyword id="KW-0479">Metal-binding</keyword>
<keyword id="KW-0507">mRNA processing</keyword>
<keyword id="KW-0540">Nuclease</keyword>
<keyword id="KW-1185">Reference proteome</keyword>
<keyword id="KW-0677">Repeat</keyword>
<keyword id="KW-0694">RNA-binding</keyword>
<keyword id="KW-0698">rRNA processing</keyword>
<keyword id="KW-0699">rRNA-binding</keyword>
<keyword id="KW-0819">tRNA processing</keyword>
<evidence type="ECO:0000250" key="1"/>
<evidence type="ECO:0000255" key="2"/>
<evidence type="ECO:0000305" key="3"/>
<name>RNC_ROSHA</name>
<protein>
    <recommendedName>
        <fullName>Ribonuclease 3</fullName>
        <ecNumber>3.1.26.3</ecNumber>
    </recommendedName>
    <alternativeName>
        <fullName>Ribonuclease III</fullName>
        <shortName>RNase III</shortName>
    </alternativeName>
</protein>
<reference key="1">
    <citation type="journal article" date="2015" name="Genome Announc.">
        <title>Complete genome sequence of the human gut symbiont Roseburia hominis.</title>
        <authorList>
            <person name="Travis A.J."/>
            <person name="Kelly D."/>
            <person name="Flint H.J."/>
            <person name="Aminov R.I."/>
        </authorList>
    </citation>
    <scope>NUCLEOTIDE SEQUENCE [LARGE SCALE GENOMIC DNA]</scope>
    <source>
        <strain>DSM 16839 / JCM 17582 / NCIMB 14029 / A2-183</strain>
    </source>
</reference>
<dbReference type="EC" id="3.1.26.3"/>
<dbReference type="EMBL" id="CP003040">
    <property type="protein sequence ID" value="AEN98131.1"/>
    <property type="molecule type" value="Genomic_DNA"/>
</dbReference>
<dbReference type="RefSeq" id="WP_014081094.1">
    <property type="nucleotide sequence ID" value="NC_015977.1"/>
</dbReference>
<dbReference type="SMR" id="G2SYN4"/>
<dbReference type="STRING" id="585394.RHOM_15125"/>
<dbReference type="GeneID" id="93725075"/>
<dbReference type="KEGG" id="rho:RHOM_15125"/>
<dbReference type="eggNOG" id="COG0571">
    <property type="taxonomic scope" value="Bacteria"/>
</dbReference>
<dbReference type="HOGENOM" id="CLU_775860_0_0_9"/>
<dbReference type="OrthoDB" id="9805026at2"/>
<dbReference type="Proteomes" id="UP000008178">
    <property type="component" value="Chromosome"/>
</dbReference>
<dbReference type="GO" id="GO:0005737">
    <property type="term" value="C:cytoplasm"/>
    <property type="evidence" value="ECO:0007669"/>
    <property type="project" value="UniProtKB-SubCell"/>
</dbReference>
<dbReference type="GO" id="GO:0046872">
    <property type="term" value="F:metal ion binding"/>
    <property type="evidence" value="ECO:0007669"/>
    <property type="project" value="UniProtKB-KW"/>
</dbReference>
<dbReference type="GO" id="GO:0004525">
    <property type="term" value="F:ribonuclease III activity"/>
    <property type="evidence" value="ECO:0007669"/>
    <property type="project" value="UniProtKB-UniRule"/>
</dbReference>
<dbReference type="GO" id="GO:0019843">
    <property type="term" value="F:rRNA binding"/>
    <property type="evidence" value="ECO:0007669"/>
    <property type="project" value="UniProtKB-KW"/>
</dbReference>
<dbReference type="GO" id="GO:0006397">
    <property type="term" value="P:mRNA processing"/>
    <property type="evidence" value="ECO:0007669"/>
    <property type="project" value="UniProtKB-UniRule"/>
</dbReference>
<dbReference type="GO" id="GO:0006364">
    <property type="term" value="P:rRNA processing"/>
    <property type="evidence" value="ECO:0007669"/>
    <property type="project" value="UniProtKB-UniRule"/>
</dbReference>
<dbReference type="GO" id="GO:0008033">
    <property type="term" value="P:tRNA processing"/>
    <property type="evidence" value="ECO:0007669"/>
    <property type="project" value="UniProtKB-KW"/>
</dbReference>
<dbReference type="CDD" id="cd00048">
    <property type="entry name" value="DSRM_SF"/>
    <property type="match status" value="2"/>
</dbReference>
<dbReference type="CDD" id="cd00593">
    <property type="entry name" value="RIBOc"/>
    <property type="match status" value="1"/>
</dbReference>
<dbReference type="Gene3D" id="3.30.160.20">
    <property type="match status" value="2"/>
</dbReference>
<dbReference type="Gene3D" id="1.10.1520.10">
    <property type="entry name" value="Ribonuclease III domain"/>
    <property type="match status" value="1"/>
</dbReference>
<dbReference type="HAMAP" id="MF_00104">
    <property type="entry name" value="RNase_III"/>
    <property type="match status" value="1"/>
</dbReference>
<dbReference type="InterPro" id="IPR014720">
    <property type="entry name" value="dsRBD_dom"/>
</dbReference>
<dbReference type="InterPro" id="IPR011907">
    <property type="entry name" value="RNase_III"/>
</dbReference>
<dbReference type="InterPro" id="IPR000999">
    <property type="entry name" value="RNase_III_dom"/>
</dbReference>
<dbReference type="InterPro" id="IPR036389">
    <property type="entry name" value="RNase_III_sf"/>
</dbReference>
<dbReference type="PANTHER" id="PTHR14950">
    <property type="entry name" value="DICER-RELATED"/>
    <property type="match status" value="1"/>
</dbReference>
<dbReference type="PANTHER" id="PTHR14950:SF37">
    <property type="entry name" value="ENDORIBONUCLEASE DICER"/>
    <property type="match status" value="1"/>
</dbReference>
<dbReference type="Pfam" id="PF00035">
    <property type="entry name" value="dsrm"/>
    <property type="match status" value="1"/>
</dbReference>
<dbReference type="Pfam" id="PF14622">
    <property type="entry name" value="Ribonucleas_3_3"/>
    <property type="match status" value="1"/>
</dbReference>
<dbReference type="SMART" id="SM00358">
    <property type="entry name" value="DSRM"/>
    <property type="match status" value="2"/>
</dbReference>
<dbReference type="SMART" id="SM00535">
    <property type="entry name" value="RIBOc"/>
    <property type="match status" value="1"/>
</dbReference>
<dbReference type="SUPFAM" id="SSF54768">
    <property type="entry name" value="dsRNA-binding domain-like"/>
    <property type="match status" value="2"/>
</dbReference>
<dbReference type="SUPFAM" id="SSF69065">
    <property type="entry name" value="RNase III domain-like"/>
    <property type="match status" value="1"/>
</dbReference>
<dbReference type="PROSITE" id="PS50137">
    <property type="entry name" value="DS_RBD"/>
    <property type="match status" value="2"/>
</dbReference>
<dbReference type="PROSITE" id="PS50142">
    <property type="entry name" value="RNASE_3_2"/>
    <property type="match status" value="1"/>
</dbReference>
<comment type="function">
    <text evidence="1">Digests double-stranded RNA. Involved in the processing of primary rRNA transcript to yield the immediate precursors to the large and small rRNAs (23S and 16S). Processes some mRNAs, and tRNAs when they are encoded in the rRNA operon. Processes pre-crRNA and tracrRNA of type II CRISPR loci if present in the organism (By similarity).</text>
</comment>
<comment type="catalytic activity">
    <reaction>
        <text>Endonucleolytic cleavage to 5'-phosphomonoester.</text>
        <dbReference type="EC" id="3.1.26.3"/>
    </reaction>
</comment>
<comment type="cofactor">
    <cofactor evidence="1">
        <name>Mg(2+)</name>
        <dbReference type="ChEBI" id="CHEBI:18420"/>
    </cofactor>
</comment>
<comment type="subunit">
    <text evidence="1">Homodimer.</text>
</comment>
<comment type="subcellular location">
    <subcellularLocation>
        <location evidence="1">Cytoplasm</location>
    </subcellularLocation>
</comment>
<comment type="similarity">
    <text evidence="3">Belongs to the ribonuclease III family.</text>
</comment>